<accession>C1CLQ9</accession>
<evidence type="ECO:0000255" key="1">
    <source>
        <dbReference type="HAMAP-Rule" id="MF_01554"/>
    </source>
</evidence>
<keyword id="KW-0413">Isomerase</keyword>
<keyword id="KW-0460">Magnesium</keyword>
<keyword id="KW-0479">Metal-binding</keyword>
<keyword id="KW-0597">Phosphoprotein</keyword>
<dbReference type="EC" id="5.4.2.10" evidence="1"/>
<dbReference type="EMBL" id="CP000920">
    <property type="protein sequence ID" value="ACO21953.1"/>
    <property type="molecule type" value="Genomic_DNA"/>
</dbReference>
<dbReference type="RefSeq" id="WP_000521410.1">
    <property type="nucleotide sequence ID" value="NC_012467.1"/>
</dbReference>
<dbReference type="SMR" id="C1CLQ9"/>
<dbReference type="KEGG" id="spp:SPP_1583"/>
<dbReference type="HOGENOM" id="CLU_016950_7_0_9"/>
<dbReference type="GO" id="GO:0005829">
    <property type="term" value="C:cytosol"/>
    <property type="evidence" value="ECO:0007669"/>
    <property type="project" value="TreeGrafter"/>
</dbReference>
<dbReference type="GO" id="GO:0000287">
    <property type="term" value="F:magnesium ion binding"/>
    <property type="evidence" value="ECO:0007669"/>
    <property type="project" value="UniProtKB-UniRule"/>
</dbReference>
<dbReference type="GO" id="GO:0008966">
    <property type="term" value="F:phosphoglucosamine mutase activity"/>
    <property type="evidence" value="ECO:0007669"/>
    <property type="project" value="UniProtKB-UniRule"/>
</dbReference>
<dbReference type="GO" id="GO:0004615">
    <property type="term" value="F:phosphomannomutase activity"/>
    <property type="evidence" value="ECO:0007669"/>
    <property type="project" value="TreeGrafter"/>
</dbReference>
<dbReference type="GO" id="GO:0005975">
    <property type="term" value="P:carbohydrate metabolic process"/>
    <property type="evidence" value="ECO:0007669"/>
    <property type="project" value="InterPro"/>
</dbReference>
<dbReference type="GO" id="GO:0009252">
    <property type="term" value="P:peptidoglycan biosynthetic process"/>
    <property type="evidence" value="ECO:0007669"/>
    <property type="project" value="TreeGrafter"/>
</dbReference>
<dbReference type="GO" id="GO:0006048">
    <property type="term" value="P:UDP-N-acetylglucosamine biosynthetic process"/>
    <property type="evidence" value="ECO:0007669"/>
    <property type="project" value="TreeGrafter"/>
</dbReference>
<dbReference type="CDD" id="cd05802">
    <property type="entry name" value="GlmM"/>
    <property type="match status" value="1"/>
</dbReference>
<dbReference type="FunFam" id="3.30.310.50:FF:000001">
    <property type="entry name" value="Phosphoglucosamine mutase"/>
    <property type="match status" value="1"/>
</dbReference>
<dbReference type="FunFam" id="3.40.120.10:FF:000001">
    <property type="entry name" value="Phosphoglucosamine mutase"/>
    <property type="match status" value="1"/>
</dbReference>
<dbReference type="FunFam" id="3.40.120.10:FF:000002">
    <property type="entry name" value="Phosphoglucosamine mutase"/>
    <property type="match status" value="1"/>
</dbReference>
<dbReference type="Gene3D" id="3.40.120.10">
    <property type="entry name" value="Alpha-D-Glucose-1,6-Bisphosphate, subunit A, domain 3"/>
    <property type="match status" value="3"/>
</dbReference>
<dbReference type="Gene3D" id="3.30.310.50">
    <property type="entry name" value="Alpha-D-phosphohexomutase, C-terminal domain"/>
    <property type="match status" value="1"/>
</dbReference>
<dbReference type="HAMAP" id="MF_01554_B">
    <property type="entry name" value="GlmM_B"/>
    <property type="match status" value="1"/>
</dbReference>
<dbReference type="InterPro" id="IPR005844">
    <property type="entry name" value="A-D-PHexomutase_a/b/a-I"/>
</dbReference>
<dbReference type="InterPro" id="IPR016055">
    <property type="entry name" value="A-D-PHexomutase_a/b/a-I/II/III"/>
</dbReference>
<dbReference type="InterPro" id="IPR005845">
    <property type="entry name" value="A-D-PHexomutase_a/b/a-II"/>
</dbReference>
<dbReference type="InterPro" id="IPR005846">
    <property type="entry name" value="A-D-PHexomutase_a/b/a-III"/>
</dbReference>
<dbReference type="InterPro" id="IPR005843">
    <property type="entry name" value="A-D-PHexomutase_C"/>
</dbReference>
<dbReference type="InterPro" id="IPR036900">
    <property type="entry name" value="A-D-PHexomutase_C_sf"/>
</dbReference>
<dbReference type="InterPro" id="IPR016066">
    <property type="entry name" value="A-D-PHexomutase_CS"/>
</dbReference>
<dbReference type="InterPro" id="IPR005841">
    <property type="entry name" value="Alpha-D-phosphohexomutase_SF"/>
</dbReference>
<dbReference type="InterPro" id="IPR006352">
    <property type="entry name" value="GlmM_bact"/>
</dbReference>
<dbReference type="InterPro" id="IPR050060">
    <property type="entry name" value="Phosphoglucosamine_mutase"/>
</dbReference>
<dbReference type="NCBIfam" id="TIGR01455">
    <property type="entry name" value="glmM"/>
    <property type="match status" value="1"/>
</dbReference>
<dbReference type="PANTHER" id="PTHR42946:SF1">
    <property type="entry name" value="PHOSPHOGLUCOMUTASE (ALPHA-D-GLUCOSE-1,6-BISPHOSPHATE-DEPENDENT)"/>
    <property type="match status" value="1"/>
</dbReference>
<dbReference type="PANTHER" id="PTHR42946">
    <property type="entry name" value="PHOSPHOHEXOSE MUTASE"/>
    <property type="match status" value="1"/>
</dbReference>
<dbReference type="Pfam" id="PF02878">
    <property type="entry name" value="PGM_PMM_I"/>
    <property type="match status" value="1"/>
</dbReference>
<dbReference type="Pfam" id="PF02879">
    <property type="entry name" value="PGM_PMM_II"/>
    <property type="match status" value="1"/>
</dbReference>
<dbReference type="Pfam" id="PF02880">
    <property type="entry name" value="PGM_PMM_III"/>
    <property type="match status" value="1"/>
</dbReference>
<dbReference type="Pfam" id="PF00408">
    <property type="entry name" value="PGM_PMM_IV"/>
    <property type="match status" value="1"/>
</dbReference>
<dbReference type="PRINTS" id="PR00509">
    <property type="entry name" value="PGMPMM"/>
</dbReference>
<dbReference type="SUPFAM" id="SSF55957">
    <property type="entry name" value="Phosphoglucomutase, C-terminal domain"/>
    <property type="match status" value="1"/>
</dbReference>
<dbReference type="SUPFAM" id="SSF53738">
    <property type="entry name" value="Phosphoglucomutase, first 3 domains"/>
    <property type="match status" value="3"/>
</dbReference>
<dbReference type="PROSITE" id="PS00710">
    <property type="entry name" value="PGM_PMM"/>
    <property type="match status" value="1"/>
</dbReference>
<feature type="chain" id="PRO_1000185388" description="Phosphoglucosamine mutase">
    <location>
        <begin position="1"/>
        <end position="450"/>
    </location>
</feature>
<feature type="active site" description="Phosphoserine intermediate" evidence="1">
    <location>
        <position position="101"/>
    </location>
</feature>
<feature type="binding site" description="via phosphate group" evidence="1">
    <location>
        <position position="101"/>
    </location>
    <ligand>
        <name>Mg(2+)</name>
        <dbReference type="ChEBI" id="CHEBI:18420"/>
    </ligand>
</feature>
<feature type="binding site" evidence="1">
    <location>
        <position position="240"/>
    </location>
    <ligand>
        <name>Mg(2+)</name>
        <dbReference type="ChEBI" id="CHEBI:18420"/>
    </ligand>
</feature>
<feature type="binding site" evidence="1">
    <location>
        <position position="242"/>
    </location>
    <ligand>
        <name>Mg(2+)</name>
        <dbReference type="ChEBI" id="CHEBI:18420"/>
    </ligand>
</feature>
<feature type="binding site" evidence="1">
    <location>
        <position position="244"/>
    </location>
    <ligand>
        <name>Mg(2+)</name>
        <dbReference type="ChEBI" id="CHEBI:18420"/>
    </ligand>
</feature>
<feature type="modified residue" description="Phosphoserine" evidence="1">
    <location>
        <position position="101"/>
    </location>
</feature>
<sequence length="450" mass="48124">MGKYFGTDGVRGEANLELTPELAFKLGRFGGYVLSQHETEAPKVFVGRDTRISGEMLESALVAGLLSVGIHVYKLGVLATPAVAYLVETEGASAGVMISASHNPALDNGIKFFGGDGFKLDDEKEAEIEALLDAEEDTLPRPSAEGLGILVDYPEGLRKYEGYLVSTGTPLDGMKVALDTANGAASTSARQIFADLGAQLTVIGETPDGLNINLNVGSTHPEALQEVVKESGSAIGLAFDGDSDRLIAVDENGDIVDGDKIMYIIGKYLSEKGQLAQNTIVTTVMSNLGFHKALNREGINKAVTAVGDRYVVEEMRKSGYNLGGEQSGHVILMDYNTTGDGQLSAVQLTKIMKETGKSLSELAAEVTIYPQKLVNIRVENVMKEKAMEVPAIKAIIEKMEEEMAGNGRILVRPSGTEPLLRVMAEAPTTEEVDYYVDTITDVVRAEIGID</sequence>
<organism>
    <name type="scientific">Streptococcus pneumoniae (strain P1031)</name>
    <dbReference type="NCBI Taxonomy" id="488223"/>
    <lineage>
        <taxon>Bacteria</taxon>
        <taxon>Bacillati</taxon>
        <taxon>Bacillota</taxon>
        <taxon>Bacilli</taxon>
        <taxon>Lactobacillales</taxon>
        <taxon>Streptococcaceae</taxon>
        <taxon>Streptococcus</taxon>
    </lineage>
</organism>
<gene>
    <name evidence="1" type="primary">glmM</name>
    <name type="ordered locus">SPP_1583</name>
</gene>
<proteinExistence type="inferred from homology"/>
<name>GLMM_STRZP</name>
<comment type="function">
    <text evidence="1">Catalyzes the conversion of glucosamine-6-phosphate to glucosamine-1-phosphate.</text>
</comment>
<comment type="catalytic activity">
    <reaction evidence="1">
        <text>alpha-D-glucosamine 1-phosphate = D-glucosamine 6-phosphate</text>
        <dbReference type="Rhea" id="RHEA:23424"/>
        <dbReference type="ChEBI" id="CHEBI:58516"/>
        <dbReference type="ChEBI" id="CHEBI:58725"/>
        <dbReference type="EC" id="5.4.2.10"/>
    </reaction>
</comment>
<comment type="cofactor">
    <cofactor evidence="1">
        <name>Mg(2+)</name>
        <dbReference type="ChEBI" id="CHEBI:18420"/>
    </cofactor>
    <text evidence="1">Binds 1 Mg(2+) ion per subunit.</text>
</comment>
<comment type="PTM">
    <text evidence="1">Activated by phosphorylation.</text>
</comment>
<comment type="similarity">
    <text evidence="1">Belongs to the phosphohexose mutase family.</text>
</comment>
<protein>
    <recommendedName>
        <fullName evidence="1">Phosphoglucosamine mutase</fullName>
        <ecNumber evidence="1">5.4.2.10</ecNumber>
    </recommendedName>
</protein>
<reference key="1">
    <citation type="journal article" date="2010" name="Genome Biol.">
        <title>Structure and dynamics of the pan-genome of Streptococcus pneumoniae and closely related species.</title>
        <authorList>
            <person name="Donati C."/>
            <person name="Hiller N.L."/>
            <person name="Tettelin H."/>
            <person name="Muzzi A."/>
            <person name="Croucher N.J."/>
            <person name="Angiuoli S.V."/>
            <person name="Oggioni M."/>
            <person name="Dunning Hotopp J.C."/>
            <person name="Hu F.Z."/>
            <person name="Riley D.R."/>
            <person name="Covacci A."/>
            <person name="Mitchell T.J."/>
            <person name="Bentley S.D."/>
            <person name="Kilian M."/>
            <person name="Ehrlich G.D."/>
            <person name="Rappuoli R."/>
            <person name="Moxon E.R."/>
            <person name="Masignani V."/>
        </authorList>
    </citation>
    <scope>NUCLEOTIDE SEQUENCE [LARGE SCALE GENOMIC DNA]</scope>
    <source>
        <strain>P1031</strain>
    </source>
</reference>